<name>DOPD_XENTR</name>
<evidence type="ECO:0000250" key="1">
    <source>
        <dbReference type="UniProtKB" id="O35215"/>
    </source>
</evidence>
<evidence type="ECO:0000250" key="2">
    <source>
        <dbReference type="UniProtKB" id="P30046"/>
    </source>
</evidence>
<evidence type="ECO:0000305" key="3"/>
<dbReference type="EC" id="4.1.1.84" evidence="2"/>
<dbReference type="EMBL" id="CR760012">
    <property type="protein sequence ID" value="CAJ83351.1"/>
    <property type="molecule type" value="mRNA"/>
</dbReference>
<dbReference type="EMBL" id="BC135935">
    <property type="protein sequence ID" value="AAI35936.1"/>
    <property type="molecule type" value="mRNA"/>
</dbReference>
<dbReference type="RefSeq" id="NP_001017261.1">
    <property type="nucleotide sequence ID" value="NM_001017261.3"/>
</dbReference>
<dbReference type="SMR" id="Q28J83"/>
<dbReference type="FunCoup" id="Q28J83">
    <property type="interactions" value="111"/>
</dbReference>
<dbReference type="STRING" id="8364.ENSXETP00000007998"/>
<dbReference type="PaxDb" id="8364-ENSXETP00000048361"/>
<dbReference type="DNASU" id="550015"/>
<dbReference type="GeneID" id="550015"/>
<dbReference type="KEGG" id="xtr:550015"/>
<dbReference type="AGR" id="Xenbase:XB-GENE-976099"/>
<dbReference type="CTD" id="1652"/>
<dbReference type="Xenbase" id="XB-GENE-976099">
    <property type="gene designation" value="ddt"/>
</dbReference>
<dbReference type="eggNOG" id="KOG1759">
    <property type="taxonomic scope" value="Eukaryota"/>
</dbReference>
<dbReference type="HOGENOM" id="CLU_129906_2_0_1"/>
<dbReference type="InParanoid" id="Q28J83"/>
<dbReference type="OMA" id="PDRINIR"/>
<dbReference type="OrthoDB" id="6080988at2759"/>
<dbReference type="PhylomeDB" id="Q28J83"/>
<dbReference type="TreeFam" id="TF313853"/>
<dbReference type="Proteomes" id="UP000008143">
    <property type="component" value="Chromosome 1"/>
</dbReference>
<dbReference type="Bgee" id="ENSXETG00000022357">
    <property type="expression patterns" value="Expressed in mesonephros and 16 other cell types or tissues"/>
</dbReference>
<dbReference type="GO" id="GO:0005737">
    <property type="term" value="C:cytoplasm"/>
    <property type="evidence" value="ECO:0007669"/>
    <property type="project" value="UniProtKB-SubCell"/>
</dbReference>
<dbReference type="GO" id="GO:0033981">
    <property type="term" value="F:D-dopachrome decarboxylase activity"/>
    <property type="evidence" value="ECO:0000250"/>
    <property type="project" value="UniProtKB"/>
</dbReference>
<dbReference type="GO" id="GO:0042438">
    <property type="term" value="P:melanin biosynthetic process"/>
    <property type="evidence" value="ECO:0007669"/>
    <property type="project" value="UniProtKB-KW"/>
</dbReference>
<dbReference type="Gene3D" id="3.30.429.10">
    <property type="entry name" value="Macrophage Migration Inhibitory Factor"/>
    <property type="match status" value="1"/>
</dbReference>
<dbReference type="InterPro" id="IPR001398">
    <property type="entry name" value="Macrophage_inhib_fac"/>
</dbReference>
<dbReference type="InterPro" id="IPR014347">
    <property type="entry name" value="Tautomerase/MIF_sf"/>
</dbReference>
<dbReference type="PANTHER" id="PTHR11954">
    <property type="entry name" value="D-DOPACHROME DECARBOXYLASE"/>
    <property type="match status" value="1"/>
</dbReference>
<dbReference type="PANTHER" id="PTHR11954:SF22">
    <property type="entry name" value="D-DOPACHROME DECARBOXYLASE"/>
    <property type="match status" value="1"/>
</dbReference>
<dbReference type="Pfam" id="PF01187">
    <property type="entry name" value="MIF"/>
    <property type="match status" value="1"/>
</dbReference>
<dbReference type="SUPFAM" id="SSF55331">
    <property type="entry name" value="Tautomerase/MIF"/>
    <property type="match status" value="1"/>
</dbReference>
<accession>Q28J83</accession>
<keyword id="KW-0007">Acetylation</keyword>
<keyword id="KW-0963">Cytoplasm</keyword>
<keyword id="KW-0456">Lyase</keyword>
<keyword id="KW-0470">Melanin biosynthesis</keyword>
<keyword id="KW-1185">Reference proteome</keyword>
<sequence length="118" mass="12961">MPFVELDTNLPPQQVPQDLAEKLCSATATILSKPRERVNVTVRTGVSMVVGGSCAPCTQLLVSSIGVVGTAEQNKEHSAKFFQFLTENMGLEQDRILLRFVPLEPWQVGKKATVMTFL</sequence>
<gene>
    <name type="primary">ddt</name>
    <name type="ORF">TNeu063o20.1</name>
</gene>
<reference key="1">
    <citation type="submission" date="2006-10" db="EMBL/GenBank/DDBJ databases">
        <authorList>
            <consortium name="Sanger Xenopus tropicalis EST/cDNA project"/>
        </authorList>
    </citation>
    <scope>NUCLEOTIDE SEQUENCE [LARGE SCALE MRNA]</scope>
    <source>
        <tissue>Neurula</tissue>
    </source>
</reference>
<reference key="2">
    <citation type="submission" date="2007-03" db="EMBL/GenBank/DDBJ databases">
        <authorList>
            <consortium name="NIH - Xenopus Gene Collection (XGC) project"/>
        </authorList>
    </citation>
    <scope>NUCLEOTIDE SEQUENCE [LARGE SCALE MRNA]</scope>
    <source>
        <tissue>Embryo</tissue>
    </source>
</reference>
<comment type="function">
    <text evidence="2">Tautomerization of D-dopachrome with decarboxylation to give 5,6-dihydroxyindole (DHI).</text>
</comment>
<comment type="catalytic activity">
    <reaction evidence="2">
        <text>D-dopachrome + H(+) = 5,6-dihydroxyindole + CO2</text>
        <dbReference type="Rhea" id="RHEA:18441"/>
        <dbReference type="ChEBI" id="CHEBI:15378"/>
        <dbReference type="ChEBI" id="CHEBI:16526"/>
        <dbReference type="ChEBI" id="CHEBI:27404"/>
        <dbReference type="ChEBI" id="CHEBI:58782"/>
        <dbReference type="EC" id="4.1.1.84"/>
    </reaction>
    <physiologicalReaction direction="left-to-right" evidence="2">
        <dbReference type="Rhea" id="RHEA:18442"/>
    </physiologicalReaction>
</comment>
<comment type="subunit">
    <text evidence="2">Homotrimer.</text>
</comment>
<comment type="subcellular location">
    <subcellularLocation>
        <location evidence="2">Cytoplasm</location>
    </subcellularLocation>
</comment>
<comment type="similarity">
    <text evidence="3">Belongs to the MIF family.</text>
</comment>
<proteinExistence type="inferred from homology"/>
<protein>
    <recommendedName>
        <fullName>D-dopachrome decarboxylase</fullName>
        <ecNumber evidence="2">4.1.1.84</ecNumber>
    </recommendedName>
    <alternativeName>
        <fullName>D-dopachrome tautomerase</fullName>
    </alternativeName>
</protein>
<feature type="initiator methionine" description="Removed" evidence="1">
    <location>
        <position position="1"/>
    </location>
</feature>
<feature type="chain" id="PRO_0000337237" description="D-dopachrome decarboxylase">
    <location>
        <begin position="2"/>
        <end position="118"/>
    </location>
</feature>
<feature type="modified residue" description="N-acetylproline" evidence="1">
    <location>
        <position position="2"/>
    </location>
</feature>
<organism>
    <name type="scientific">Xenopus tropicalis</name>
    <name type="common">Western clawed frog</name>
    <name type="synonym">Silurana tropicalis</name>
    <dbReference type="NCBI Taxonomy" id="8364"/>
    <lineage>
        <taxon>Eukaryota</taxon>
        <taxon>Metazoa</taxon>
        <taxon>Chordata</taxon>
        <taxon>Craniata</taxon>
        <taxon>Vertebrata</taxon>
        <taxon>Euteleostomi</taxon>
        <taxon>Amphibia</taxon>
        <taxon>Batrachia</taxon>
        <taxon>Anura</taxon>
        <taxon>Pipoidea</taxon>
        <taxon>Pipidae</taxon>
        <taxon>Xenopodinae</taxon>
        <taxon>Xenopus</taxon>
        <taxon>Silurana</taxon>
    </lineage>
</organism>